<comment type="function">
    <text evidence="1">Catalyzes the phosphorylation of D-fructose 6-phosphate to fructose 1,6-bisphosphate by ATP, the first committing step of glycolysis.</text>
</comment>
<comment type="catalytic activity">
    <reaction evidence="1">
        <text>beta-D-fructose 6-phosphate + ATP = beta-D-fructose 1,6-bisphosphate + ADP + H(+)</text>
        <dbReference type="Rhea" id="RHEA:16109"/>
        <dbReference type="ChEBI" id="CHEBI:15378"/>
        <dbReference type="ChEBI" id="CHEBI:30616"/>
        <dbReference type="ChEBI" id="CHEBI:32966"/>
        <dbReference type="ChEBI" id="CHEBI:57634"/>
        <dbReference type="ChEBI" id="CHEBI:456216"/>
        <dbReference type="EC" id="2.7.1.11"/>
    </reaction>
</comment>
<comment type="cofactor">
    <cofactor evidence="1">
        <name>Mg(2+)</name>
        <dbReference type="ChEBI" id="CHEBI:18420"/>
    </cofactor>
</comment>
<comment type="activity regulation">
    <text evidence="1">Allosterically activated by ADP and other diphosphonucleosides, and allosterically inhibited by phosphoenolpyruvate.</text>
</comment>
<comment type="pathway">
    <text evidence="1">Carbohydrate degradation; glycolysis; D-glyceraldehyde 3-phosphate and glycerone phosphate from D-glucose: step 3/4.</text>
</comment>
<comment type="subunit">
    <text evidence="1">Homotetramer.</text>
</comment>
<comment type="subcellular location">
    <subcellularLocation>
        <location evidence="1">Cytoplasm</location>
    </subcellularLocation>
</comment>
<comment type="similarity">
    <text evidence="1">Belongs to the phosphofructokinase type A (PFKA) family. ATP-dependent PFK group I subfamily. Prokaryotic clade 'B1' sub-subfamily.</text>
</comment>
<accession>C6DHK2</accession>
<protein>
    <recommendedName>
        <fullName evidence="1">ATP-dependent 6-phosphofructokinase</fullName>
        <shortName evidence="1">ATP-PFK</shortName>
        <shortName evidence="1">Phosphofructokinase</shortName>
        <ecNumber evidence="1">2.7.1.11</ecNumber>
    </recommendedName>
    <alternativeName>
        <fullName evidence="1">Phosphohexokinase</fullName>
    </alternativeName>
</protein>
<organism>
    <name type="scientific">Pectobacterium carotovorum subsp. carotovorum (strain PC1)</name>
    <dbReference type="NCBI Taxonomy" id="561230"/>
    <lineage>
        <taxon>Bacteria</taxon>
        <taxon>Pseudomonadati</taxon>
        <taxon>Pseudomonadota</taxon>
        <taxon>Gammaproteobacteria</taxon>
        <taxon>Enterobacterales</taxon>
        <taxon>Pectobacteriaceae</taxon>
        <taxon>Pectobacterium</taxon>
    </lineage>
</organism>
<keyword id="KW-0021">Allosteric enzyme</keyword>
<keyword id="KW-0067">ATP-binding</keyword>
<keyword id="KW-0963">Cytoplasm</keyword>
<keyword id="KW-0324">Glycolysis</keyword>
<keyword id="KW-0418">Kinase</keyword>
<keyword id="KW-0460">Magnesium</keyword>
<keyword id="KW-0479">Metal-binding</keyword>
<keyword id="KW-0547">Nucleotide-binding</keyword>
<keyword id="KW-0808">Transferase</keyword>
<sequence>MIRRIGVLTSGGDAPGMNAAIRGVVRAALTEGLEVYGIYDGYQGLYEDRMEQLDRYSVSDVINRGGTFLGSARFPQFRDEAVRQVCVENMKRRGLDALVVIGGDGSYMGAKRLTEMGFPCIGLPGTIDNDVAGTDYTIGYFTALETVLEAIDRLRDTSSSHQRISIVEVMGRHCGDLTLAAAIAGGCEFIVLPEVPFSPEDLVCEIKAGIEKGKKHAIVAITELVCDVDELAKYIEKETGRETRATVLGHIQRGGSPVAYDRILASRMGAYSIELLQQGYGGRCVGIQNEKMVHHDIVDAIENMKRPFKGDWLDTAKKLF</sequence>
<reference key="1">
    <citation type="submission" date="2009-07" db="EMBL/GenBank/DDBJ databases">
        <title>Complete sequence of Pectobacterium carotovorum subsp. carotovorum PC1.</title>
        <authorList>
            <consortium name="US DOE Joint Genome Institute"/>
            <person name="Lucas S."/>
            <person name="Copeland A."/>
            <person name="Lapidus A."/>
            <person name="Glavina del Rio T."/>
            <person name="Tice H."/>
            <person name="Bruce D."/>
            <person name="Goodwin L."/>
            <person name="Pitluck S."/>
            <person name="Munk A.C."/>
            <person name="Brettin T."/>
            <person name="Detter J.C."/>
            <person name="Han C."/>
            <person name="Tapia R."/>
            <person name="Larimer F."/>
            <person name="Land M."/>
            <person name="Hauser L."/>
            <person name="Kyrpides N."/>
            <person name="Mikhailova N."/>
            <person name="Balakrishnan V."/>
            <person name="Glasner J."/>
            <person name="Perna N.T."/>
        </authorList>
    </citation>
    <scope>NUCLEOTIDE SEQUENCE [LARGE SCALE GENOMIC DNA]</scope>
    <source>
        <strain>PC1</strain>
    </source>
</reference>
<name>PFKA_PECCP</name>
<dbReference type="EC" id="2.7.1.11" evidence="1"/>
<dbReference type="EMBL" id="CP001657">
    <property type="protein sequence ID" value="ACT11202.1"/>
    <property type="molecule type" value="Genomic_DNA"/>
</dbReference>
<dbReference type="RefSeq" id="WP_012772882.1">
    <property type="nucleotide sequence ID" value="NC_012917.1"/>
</dbReference>
<dbReference type="SMR" id="C6DHK2"/>
<dbReference type="STRING" id="561230.PC1_0140"/>
<dbReference type="GeneID" id="67791983"/>
<dbReference type="KEGG" id="pct:PC1_0140"/>
<dbReference type="eggNOG" id="COG0205">
    <property type="taxonomic scope" value="Bacteria"/>
</dbReference>
<dbReference type="HOGENOM" id="CLU_020655_0_1_6"/>
<dbReference type="OrthoDB" id="9802503at2"/>
<dbReference type="UniPathway" id="UPA00109">
    <property type="reaction ID" value="UER00182"/>
</dbReference>
<dbReference type="Proteomes" id="UP000002736">
    <property type="component" value="Chromosome"/>
</dbReference>
<dbReference type="GO" id="GO:0005945">
    <property type="term" value="C:6-phosphofructokinase complex"/>
    <property type="evidence" value="ECO:0007669"/>
    <property type="project" value="TreeGrafter"/>
</dbReference>
<dbReference type="GO" id="GO:0003872">
    <property type="term" value="F:6-phosphofructokinase activity"/>
    <property type="evidence" value="ECO:0007669"/>
    <property type="project" value="UniProtKB-UniRule"/>
</dbReference>
<dbReference type="GO" id="GO:0016208">
    <property type="term" value="F:AMP binding"/>
    <property type="evidence" value="ECO:0007669"/>
    <property type="project" value="TreeGrafter"/>
</dbReference>
<dbReference type="GO" id="GO:0005524">
    <property type="term" value="F:ATP binding"/>
    <property type="evidence" value="ECO:0007669"/>
    <property type="project" value="UniProtKB-KW"/>
</dbReference>
<dbReference type="GO" id="GO:0070095">
    <property type="term" value="F:fructose-6-phosphate binding"/>
    <property type="evidence" value="ECO:0007669"/>
    <property type="project" value="TreeGrafter"/>
</dbReference>
<dbReference type="GO" id="GO:0042802">
    <property type="term" value="F:identical protein binding"/>
    <property type="evidence" value="ECO:0007669"/>
    <property type="project" value="TreeGrafter"/>
</dbReference>
<dbReference type="GO" id="GO:0046872">
    <property type="term" value="F:metal ion binding"/>
    <property type="evidence" value="ECO:0007669"/>
    <property type="project" value="UniProtKB-KW"/>
</dbReference>
<dbReference type="GO" id="GO:0048029">
    <property type="term" value="F:monosaccharide binding"/>
    <property type="evidence" value="ECO:0007669"/>
    <property type="project" value="TreeGrafter"/>
</dbReference>
<dbReference type="GO" id="GO:0061621">
    <property type="term" value="P:canonical glycolysis"/>
    <property type="evidence" value="ECO:0007669"/>
    <property type="project" value="TreeGrafter"/>
</dbReference>
<dbReference type="GO" id="GO:0030388">
    <property type="term" value="P:fructose 1,6-bisphosphate metabolic process"/>
    <property type="evidence" value="ECO:0007669"/>
    <property type="project" value="TreeGrafter"/>
</dbReference>
<dbReference type="GO" id="GO:0006002">
    <property type="term" value="P:fructose 6-phosphate metabolic process"/>
    <property type="evidence" value="ECO:0007669"/>
    <property type="project" value="InterPro"/>
</dbReference>
<dbReference type="CDD" id="cd00763">
    <property type="entry name" value="Bacterial_PFK"/>
    <property type="match status" value="1"/>
</dbReference>
<dbReference type="FunFam" id="3.40.50.450:FF:000001">
    <property type="entry name" value="ATP-dependent 6-phosphofructokinase"/>
    <property type="match status" value="1"/>
</dbReference>
<dbReference type="FunFam" id="3.40.50.460:FF:000002">
    <property type="entry name" value="ATP-dependent 6-phosphofructokinase"/>
    <property type="match status" value="1"/>
</dbReference>
<dbReference type="Gene3D" id="3.40.50.450">
    <property type="match status" value="1"/>
</dbReference>
<dbReference type="Gene3D" id="3.40.50.460">
    <property type="entry name" value="Phosphofructokinase domain"/>
    <property type="match status" value="1"/>
</dbReference>
<dbReference type="HAMAP" id="MF_00339">
    <property type="entry name" value="Phosphofructokinase_I_B1"/>
    <property type="match status" value="1"/>
</dbReference>
<dbReference type="InterPro" id="IPR022953">
    <property type="entry name" value="ATP_PFK"/>
</dbReference>
<dbReference type="InterPro" id="IPR012003">
    <property type="entry name" value="ATP_PFK_prok-type"/>
</dbReference>
<dbReference type="InterPro" id="IPR012828">
    <property type="entry name" value="PFKA_ATP_prok"/>
</dbReference>
<dbReference type="InterPro" id="IPR015912">
    <property type="entry name" value="Phosphofructokinase_CS"/>
</dbReference>
<dbReference type="InterPro" id="IPR000023">
    <property type="entry name" value="Phosphofructokinase_dom"/>
</dbReference>
<dbReference type="InterPro" id="IPR035966">
    <property type="entry name" value="PKF_sf"/>
</dbReference>
<dbReference type="NCBIfam" id="TIGR02482">
    <property type="entry name" value="PFKA_ATP"/>
    <property type="match status" value="1"/>
</dbReference>
<dbReference type="NCBIfam" id="NF002872">
    <property type="entry name" value="PRK03202.1"/>
    <property type="match status" value="1"/>
</dbReference>
<dbReference type="PANTHER" id="PTHR13697:SF4">
    <property type="entry name" value="ATP-DEPENDENT 6-PHOSPHOFRUCTOKINASE"/>
    <property type="match status" value="1"/>
</dbReference>
<dbReference type="PANTHER" id="PTHR13697">
    <property type="entry name" value="PHOSPHOFRUCTOKINASE"/>
    <property type="match status" value="1"/>
</dbReference>
<dbReference type="Pfam" id="PF00365">
    <property type="entry name" value="PFK"/>
    <property type="match status" value="1"/>
</dbReference>
<dbReference type="PIRSF" id="PIRSF000532">
    <property type="entry name" value="ATP_PFK_prok"/>
    <property type="match status" value="1"/>
</dbReference>
<dbReference type="PRINTS" id="PR00476">
    <property type="entry name" value="PHFRCTKINASE"/>
</dbReference>
<dbReference type="SUPFAM" id="SSF53784">
    <property type="entry name" value="Phosphofructokinase"/>
    <property type="match status" value="1"/>
</dbReference>
<dbReference type="PROSITE" id="PS00433">
    <property type="entry name" value="PHOSPHOFRUCTOKINASE"/>
    <property type="match status" value="1"/>
</dbReference>
<evidence type="ECO:0000255" key="1">
    <source>
        <dbReference type="HAMAP-Rule" id="MF_00339"/>
    </source>
</evidence>
<feature type="chain" id="PRO_1000205250" description="ATP-dependent 6-phosphofructokinase">
    <location>
        <begin position="1"/>
        <end position="320"/>
    </location>
</feature>
<feature type="active site" description="Proton acceptor" evidence="1">
    <location>
        <position position="128"/>
    </location>
</feature>
<feature type="binding site" evidence="1">
    <location>
        <position position="12"/>
    </location>
    <ligand>
        <name>ATP</name>
        <dbReference type="ChEBI" id="CHEBI:30616"/>
    </ligand>
</feature>
<feature type="binding site" evidence="1">
    <location>
        <begin position="22"/>
        <end position="26"/>
    </location>
    <ligand>
        <name>ADP</name>
        <dbReference type="ChEBI" id="CHEBI:456216"/>
        <note>allosteric activator; ligand shared between dimeric partners</note>
    </ligand>
</feature>
<feature type="binding site" evidence="1">
    <location>
        <begin position="55"/>
        <end position="60"/>
    </location>
    <ligand>
        <name>ADP</name>
        <dbReference type="ChEBI" id="CHEBI:456216"/>
        <note>allosteric activator; ligand shared between dimeric partners</note>
    </ligand>
</feature>
<feature type="binding site" evidence="1">
    <location>
        <begin position="73"/>
        <end position="74"/>
    </location>
    <ligand>
        <name>ATP</name>
        <dbReference type="ChEBI" id="CHEBI:30616"/>
    </ligand>
</feature>
<feature type="binding site" evidence="1">
    <location>
        <begin position="103"/>
        <end position="106"/>
    </location>
    <ligand>
        <name>ATP</name>
        <dbReference type="ChEBI" id="CHEBI:30616"/>
    </ligand>
</feature>
<feature type="binding site" evidence="1">
    <location>
        <position position="104"/>
    </location>
    <ligand>
        <name>Mg(2+)</name>
        <dbReference type="ChEBI" id="CHEBI:18420"/>
        <note>catalytic</note>
    </ligand>
</feature>
<feature type="binding site" description="in other chain" evidence="1">
    <location>
        <begin position="126"/>
        <end position="128"/>
    </location>
    <ligand>
        <name>substrate</name>
        <note>ligand shared between dimeric partners</note>
    </ligand>
</feature>
<feature type="binding site" description="in other chain" evidence="1">
    <location>
        <position position="155"/>
    </location>
    <ligand>
        <name>ADP</name>
        <dbReference type="ChEBI" id="CHEBI:456216"/>
        <note>allosteric activator; ligand shared between dimeric partners</note>
    </ligand>
</feature>
<feature type="binding site" evidence="1">
    <location>
        <position position="163"/>
    </location>
    <ligand>
        <name>substrate</name>
        <note>ligand shared between dimeric partners</note>
    </ligand>
</feature>
<feature type="binding site" description="in other chain" evidence="1">
    <location>
        <begin position="170"/>
        <end position="172"/>
    </location>
    <ligand>
        <name>substrate</name>
        <note>ligand shared between dimeric partners</note>
    </ligand>
</feature>
<feature type="binding site" description="in other chain" evidence="1">
    <location>
        <begin position="186"/>
        <end position="188"/>
    </location>
    <ligand>
        <name>ADP</name>
        <dbReference type="ChEBI" id="CHEBI:456216"/>
        <note>allosteric activator; ligand shared between dimeric partners</note>
    </ligand>
</feature>
<feature type="binding site" description="in other chain" evidence="1">
    <location>
        <position position="212"/>
    </location>
    <ligand>
        <name>ADP</name>
        <dbReference type="ChEBI" id="CHEBI:456216"/>
        <note>allosteric activator; ligand shared between dimeric partners</note>
    </ligand>
</feature>
<feature type="binding site" description="in other chain" evidence="1">
    <location>
        <begin position="214"/>
        <end position="216"/>
    </location>
    <ligand>
        <name>ADP</name>
        <dbReference type="ChEBI" id="CHEBI:456216"/>
        <note>allosteric activator; ligand shared between dimeric partners</note>
    </ligand>
</feature>
<feature type="binding site" description="in other chain" evidence="1">
    <location>
        <position position="223"/>
    </location>
    <ligand>
        <name>substrate</name>
        <note>ligand shared between dimeric partners</note>
    </ligand>
</feature>
<feature type="binding site" evidence="1">
    <location>
        <position position="244"/>
    </location>
    <ligand>
        <name>substrate</name>
        <note>ligand shared between dimeric partners</note>
    </ligand>
</feature>
<feature type="binding site" description="in other chain" evidence="1">
    <location>
        <begin position="250"/>
        <end position="253"/>
    </location>
    <ligand>
        <name>substrate</name>
        <note>ligand shared between dimeric partners</note>
    </ligand>
</feature>
<proteinExistence type="inferred from homology"/>
<gene>
    <name evidence="1" type="primary">pfkA</name>
    <name type="ordered locus">PC1_0140</name>
</gene>